<comment type="function">
    <text evidence="4">Required for karyogamy during female gametophyte development, when the two polar nuclei fuse to form the diploid central cell nucleus.</text>
</comment>
<comment type="subunit">
    <text evidence="6">Component of the mitochondrial ribosome small subunit (28S) which comprises a 12S rRNA and about 30 distinct proteins.</text>
</comment>
<comment type="subcellular location">
    <subcellularLocation>
        <location evidence="1 6">Mitochondrion</location>
    </subcellularLocation>
</comment>
<comment type="disruption phenotype">
    <text evidence="4">Failure of fusion of the polar nuclei during megagametogenesis.</text>
</comment>
<comment type="similarity">
    <text evidence="2">Belongs to the universal ribosomal protein uS11 family.</text>
</comment>
<comment type="sequence caution" evidence="7">
    <conflict type="erroneous gene model prediction">
        <sequence resource="EMBL-CDS" id="AAG50732"/>
    </conflict>
</comment>
<reference key="1">
    <citation type="journal article" date="2000" name="Nature">
        <title>Sequence and analysis of chromosome 1 of the plant Arabidopsis thaliana.</title>
        <authorList>
            <person name="Theologis A."/>
            <person name="Ecker J.R."/>
            <person name="Palm C.J."/>
            <person name="Federspiel N.A."/>
            <person name="Kaul S."/>
            <person name="White O."/>
            <person name="Alonso J."/>
            <person name="Altafi H."/>
            <person name="Araujo R."/>
            <person name="Bowman C.L."/>
            <person name="Brooks S.Y."/>
            <person name="Buehler E."/>
            <person name="Chan A."/>
            <person name="Chao Q."/>
            <person name="Chen H."/>
            <person name="Cheuk R.F."/>
            <person name="Chin C.W."/>
            <person name="Chung M.K."/>
            <person name="Conn L."/>
            <person name="Conway A.B."/>
            <person name="Conway A.R."/>
            <person name="Creasy T.H."/>
            <person name="Dewar K."/>
            <person name="Dunn P."/>
            <person name="Etgu P."/>
            <person name="Feldblyum T.V."/>
            <person name="Feng J.-D."/>
            <person name="Fong B."/>
            <person name="Fujii C.Y."/>
            <person name="Gill J.E."/>
            <person name="Goldsmith A.D."/>
            <person name="Haas B."/>
            <person name="Hansen N.F."/>
            <person name="Hughes B."/>
            <person name="Huizar L."/>
            <person name="Hunter J.L."/>
            <person name="Jenkins J."/>
            <person name="Johnson-Hopson C."/>
            <person name="Khan S."/>
            <person name="Khaykin E."/>
            <person name="Kim C.J."/>
            <person name="Koo H.L."/>
            <person name="Kremenetskaia I."/>
            <person name="Kurtz D.B."/>
            <person name="Kwan A."/>
            <person name="Lam B."/>
            <person name="Langin-Hooper S."/>
            <person name="Lee A."/>
            <person name="Lee J.M."/>
            <person name="Lenz C.A."/>
            <person name="Li J.H."/>
            <person name="Li Y.-P."/>
            <person name="Lin X."/>
            <person name="Liu S.X."/>
            <person name="Liu Z.A."/>
            <person name="Luros J.S."/>
            <person name="Maiti R."/>
            <person name="Marziali A."/>
            <person name="Militscher J."/>
            <person name="Miranda M."/>
            <person name="Nguyen M."/>
            <person name="Nierman W.C."/>
            <person name="Osborne B.I."/>
            <person name="Pai G."/>
            <person name="Peterson J."/>
            <person name="Pham P.K."/>
            <person name="Rizzo M."/>
            <person name="Rooney T."/>
            <person name="Rowley D."/>
            <person name="Sakano H."/>
            <person name="Salzberg S.L."/>
            <person name="Schwartz J.R."/>
            <person name="Shinn P."/>
            <person name="Southwick A.M."/>
            <person name="Sun H."/>
            <person name="Tallon L.J."/>
            <person name="Tambunga G."/>
            <person name="Toriumi M.J."/>
            <person name="Town C.D."/>
            <person name="Utterback T."/>
            <person name="Van Aken S."/>
            <person name="Vaysberg M."/>
            <person name="Vysotskaia V.S."/>
            <person name="Walker M."/>
            <person name="Wu D."/>
            <person name="Yu G."/>
            <person name="Fraser C.M."/>
            <person name="Venter J.C."/>
            <person name="Davis R.W."/>
        </authorList>
    </citation>
    <scope>NUCLEOTIDE SEQUENCE [LARGE SCALE GENOMIC DNA]</scope>
    <source>
        <strain>cv. Columbia</strain>
    </source>
</reference>
<reference key="2">
    <citation type="journal article" date="2017" name="Plant J.">
        <title>Araport11: a complete reannotation of the Arabidopsis thaliana reference genome.</title>
        <authorList>
            <person name="Cheng C.Y."/>
            <person name="Krishnakumar V."/>
            <person name="Chan A.P."/>
            <person name="Thibaud-Nissen F."/>
            <person name="Schobel S."/>
            <person name="Town C.D."/>
        </authorList>
    </citation>
    <scope>GENOME REANNOTATION</scope>
    <source>
        <strain>cv. Columbia</strain>
    </source>
</reference>
<reference key="3">
    <citation type="journal article" date="2003" name="Science">
        <title>Empirical analysis of transcriptional activity in the Arabidopsis genome.</title>
        <authorList>
            <person name="Yamada K."/>
            <person name="Lim J."/>
            <person name="Dale J.M."/>
            <person name="Chen H."/>
            <person name="Shinn P."/>
            <person name="Palm C.J."/>
            <person name="Southwick A.M."/>
            <person name="Wu H.C."/>
            <person name="Kim C.J."/>
            <person name="Nguyen M."/>
            <person name="Pham P.K."/>
            <person name="Cheuk R.F."/>
            <person name="Karlin-Newmann G."/>
            <person name="Liu S.X."/>
            <person name="Lam B."/>
            <person name="Sakano H."/>
            <person name="Wu T."/>
            <person name="Yu G."/>
            <person name="Miranda M."/>
            <person name="Quach H.L."/>
            <person name="Tripp M."/>
            <person name="Chang C.H."/>
            <person name="Lee J.M."/>
            <person name="Toriumi M.J."/>
            <person name="Chan M.M."/>
            <person name="Tang C.C."/>
            <person name="Onodera C.S."/>
            <person name="Deng J.M."/>
            <person name="Akiyama K."/>
            <person name="Ansari Y."/>
            <person name="Arakawa T."/>
            <person name="Banh J."/>
            <person name="Banno F."/>
            <person name="Bowser L."/>
            <person name="Brooks S.Y."/>
            <person name="Carninci P."/>
            <person name="Chao Q."/>
            <person name="Choy N."/>
            <person name="Enju A."/>
            <person name="Goldsmith A.D."/>
            <person name="Gurjal M."/>
            <person name="Hansen N.F."/>
            <person name="Hayashizaki Y."/>
            <person name="Johnson-Hopson C."/>
            <person name="Hsuan V.W."/>
            <person name="Iida K."/>
            <person name="Karnes M."/>
            <person name="Khan S."/>
            <person name="Koesema E."/>
            <person name="Ishida J."/>
            <person name="Jiang P.X."/>
            <person name="Jones T."/>
            <person name="Kawai J."/>
            <person name="Kamiya A."/>
            <person name="Meyers C."/>
            <person name="Nakajima M."/>
            <person name="Narusaka M."/>
            <person name="Seki M."/>
            <person name="Sakurai T."/>
            <person name="Satou M."/>
            <person name="Tamse R."/>
            <person name="Vaysberg M."/>
            <person name="Wallender E.K."/>
            <person name="Wong C."/>
            <person name="Yamamura Y."/>
            <person name="Yuan S."/>
            <person name="Shinozaki K."/>
            <person name="Davis R.W."/>
            <person name="Theologis A."/>
            <person name="Ecker J.R."/>
        </authorList>
    </citation>
    <scope>NUCLEOTIDE SEQUENCE [LARGE SCALE MRNA]</scope>
    <source>
        <strain>cv. Columbia</strain>
    </source>
</reference>
<reference key="4">
    <citation type="journal article" date="2006" name="Plant Physiol.">
        <title>NUCLEAR FUSION DEFECTIVE1 encodes the Arabidopsis RPL21M protein and is required for karyogamy during female gametophyte development and fertilization.</title>
        <authorList>
            <person name="Portereiko M.F."/>
            <person name="Sandaklie-Nikolova L."/>
            <person name="Lloyd A."/>
            <person name="Dever C.A."/>
            <person name="Otsuga D."/>
            <person name="Drews G.N."/>
        </authorList>
    </citation>
    <scope>FUNCTION</scope>
    <scope>DISRUPTION PHENOTYPE</scope>
    <source>
        <strain>cv. Columbia</strain>
    </source>
</reference>
<reference key="5">
    <citation type="journal article" date="2023" name="Plant Cell">
        <title>An updated nomenclature for plant ribosomal protein genes.</title>
        <authorList>
            <person name="Scarpin M.R."/>
            <person name="Busche M."/>
            <person name="Martinez R.E."/>
            <person name="Harper L.C."/>
            <person name="Reiser L."/>
            <person name="Szakonyi D."/>
            <person name="Merchante C."/>
            <person name="Lan T."/>
            <person name="Xiong W."/>
            <person name="Mo B."/>
            <person name="Tang G."/>
            <person name="Chen X."/>
            <person name="Bailey-Serres J."/>
            <person name="Browning K.S."/>
            <person name="Brunkard J.O."/>
        </authorList>
    </citation>
    <scope>NOMENCLATURE</scope>
</reference>
<accession>Q8VZT8</accession>
<accession>Q9C6S3</accession>
<keyword id="KW-0002">3D-structure</keyword>
<keyword id="KW-0217">Developmental protein</keyword>
<keyword id="KW-0415">Karyogamy</keyword>
<keyword id="KW-0496">Mitochondrion</keyword>
<keyword id="KW-1185">Reference proteome</keyword>
<keyword id="KW-0687">Ribonucleoprotein</keyword>
<keyword id="KW-0689">Ribosomal protein</keyword>
<keyword id="KW-0694">RNA-binding</keyword>
<keyword id="KW-0699">rRNA-binding</keyword>
<keyword id="KW-0809">Transit peptide</keyword>
<sequence>MNGVSRHLRASSLLSLIRSYGGINSVCRFSSQSDGFSGGRFREQVPVSGESANNSGLSNTGRIGSSPEPNPSTLRTFGDMKAGLLNRGVNGFSAPNAPPTFKSSLRSRLPNSLPDQFGQTNPGLPNTGGSGFSAPSLSSYENFTQSSSLLKENSRSGGKSSDLDFVREVIEDEGRRTAGIFSHFQRPNLETNADIIHIKMLRNNTFVTVTDSKGNVKCKATSGSLPDLKGGRKMTNYTADATAENIGRRAKAMGLKSVVVKVNGFTHFGKKKKAIIAFRDGFTNSRSDQNPIVYIEDTTRKAHNGCRLPRKRRV</sequence>
<dbReference type="EMBL" id="AC079041">
    <property type="protein sequence ID" value="AAG50732.1"/>
    <property type="status" value="ALT_SEQ"/>
    <property type="molecule type" value="Genomic_DNA"/>
</dbReference>
<dbReference type="EMBL" id="CP002684">
    <property type="protein sequence ID" value="AEE31398.1"/>
    <property type="molecule type" value="Genomic_DNA"/>
</dbReference>
<dbReference type="EMBL" id="AY063845">
    <property type="protein sequence ID" value="AAL36201.1"/>
    <property type="molecule type" value="mRNA"/>
</dbReference>
<dbReference type="EMBL" id="AY117289">
    <property type="protein sequence ID" value="AAM51364.1"/>
    <property type="molecule type" value="mRNA"/>
</dbReference>
<dbReference type="PIR" id="B86442">
    <property type="entry name" value="B86442"/>
</dbReference>
<dbReference type="RefSeq" id="NP_564385.1">
    <property type="nucleotide sequence ID" value="NM_102918.3"/>
</dbReference>
<dbReference type="PDB" id="6XYW">
    <property type="method" value="EM"/>
    <property type="resolution" value="3.86 A"/>
    <property type="chains" value="Bj=1-314"/>
</dbReference>
<dbReference type="PDBsum" id="6XYW"/>
<dbReference type="EMDB" id="EMD-10654"/>
<dbReference type="SMR" id="Q8VZT8"/>
<dbReference type="FunCoup" id="Q8VZT8">
    <property type="interactions" value="466"/>
</dbReference>
<dbReference type="IntAct" id="Q8VZT8">
    <property type="interactions" value="3"/>
</dbReference>
<dbReference type="STRING" id="3702.Q8VZT8"/>
<dbReference type="PaxDb" id="3702-AT1G31817.1"/>
<dbReference type="ProteomicsDB" id="226632"/>
<dbReference type="EnsemblPlants" id="AT1G31817.1">
    <property type="protein sequence ID" value="AT1G31817.1"/>
    <property type="gene ID" value="AT1G31817"/>
</dbReference>
<dbReference type="GeneID" id="840071"/>
<dbReference type="Gramene" id="AT1G31817.1">
    <property type="protein sequence ID" value="AT1G31817.1"/>
    <property type="gene ID" value="AT1G31817"/>
</dbReference>
<dbReference type="KEGG" id="ath:AT1G31817"/>
<dbReference type="Araport" id="AT1G31817"/>
<dbReference type="TAIR" id="AT1G31817">
    <property type="gene designation" value="NFD3"/>
</dbReference>
<dbReference type="eggNOG" id="ENOG502RZ9G">
    <property type="taxonomic scope" value="Eukaryota"/>
</dbReference>
<dbReference type="HOGENOM" id="CLU_892389_0_0_1"/>
<dbReference type="InParanoid" id="Q8VZT8"/>
<dbReference type="OMA" id="PNIETNA"/>
<dbReference type="PhylomeDB" id="Q8VZT8"/>
<dbReference type="PRO" id="PR:Q8VZT8"/>
<dbReference type="Proteomes" id="UP000006548">
    <property type="component" value="Chromosome 1"/>
</dbReference>
<dbReference type="ExpressionAtlas" id="Q8VZT8">
    <property type="expression patterns" value="baseline and differential"/>
</dbReference>
<dbReference type="GO" id="GO:0005739">
    <property type="term" value="C:mitochondrion"/>
    <property type="evidence" value="ECO:0007669"/>
    <property type="project" value="UniProtKB-SubCell"/>
</dbReference>
<dbReference type="GO" id="GO:1990904">
    <property type="term" value="C:ribonucleoprotein complex"/>
    <property type="evidence" value="ECO:0007669"/>
    <property type="project" value="UniProtKB-KW"/>
</dbReference>
<dbReference type="GO" id="GO:0005840">
    <property type="term" value="C:ribosome"/>
    <property type="evidence" value="ECO:0007669"/>
    <property type="project" value="UniProtKB-KW"/>
</dbReference>
<dbReference type="GO" id="GO:0019843">
    <property type="term" value="F:rRNA binding"/>
    <property type="evidence" value="ECO:0007669"/>
    <property type="project" value="UniProtKB-KW"/>
</dbReference>
<dbReference type="GO" id="GO:0003735">
    <property type="term" value="F:structural constituent of ribosome"/>
    <property type="evidence" value="ECO:0007669"/>
    <property type="project" value="InterPro"/>
</dbReference>
<dbReference type="GO" id="GO:0000741">
    <property type="term" value="P:karyogamy"/>
    <property type="evidence" value="ECO:0000315"/>
    <property type="project" value="UniProtKB"/>
</dbReference>
<dbReference type="GO" id="GO:0010197">
    <property type="term" value="P:polar nucleus fusion"/>
    <property type="evidence" value="ECO:0000315"/>
    <property type="project" value="UniProtKB"/>
</dbReference>
<dbReference type="GO" id="GO:0006412">
    <property type="term" value="P:translation"/>
    <property type="evidence" value="ECO:0007669"/>
    <property type="project" value="InterPro"/>
</dbReference>
<dbReference type="CDD" id="cd00432">
    <property type="entry name" value="Ribosomal_L18_L5e"/>
    <property type="match status" value="1"/>
</dbReference>
<dbReference type="FunFam" id="3.30.420.80:FF:000014">
    <property type="entry name" value="Probable ribosomal protein S11, mitochondrial"/>
    <property type="match status" value="1"/>
</dbReference>
<dbReference type="Gene3D" id="3.30.420.80">
    <property type="entry name" value="Ribosomal protein S11"/>
    <property type="match status" value="1"/>
</dbReference>
<dbReference type="HAMAP" id="MF_01310">
    <property type="entry name" value="Ribosomal_uS11"/>
    <property type="match status" value="1"/>
</dbReference>
<dbReference type="InterPro" id="IPR001971">
    <property type="entry name" value="Ribosomal_uS11"/>
</dbReference>
<dbReference type="InterPro" id="IPR036967">
    <property type="entry name" value="Ribosomal_uS11_sf"/>
</dbReference>
<dbReference type="PANTHER" id="PTHR11759">
    <property type="entry name" value="40S RIBOSOMAL PROTEIN S14/30S RIBOSOMAL PROTEIN S11"/>
    <property type="match status" value="1"/>
</dbReference>
<dbReference type="Pfam" id="PF00411">
    <property type="entry name" value="Ribosomal_S11"/>
    <property type="match status" value="1"/>
</dbReference>
<dbReference type="SUPFAM" id="SSF53137">
    <property type="entry name" value="Translational machinery components"/>
    <property type="match status" value="1"/>
</dbReference>
<proteinExistence type="evidence at protein level"/>
<organism evidence="10">
    <name type="scientific">Arabidopsis thaliana</name>
    <name type="common">Mouse-ear cress</name>
    <dbReference type="NCBI Taxonomy" id="3702"/>
    <lineage>
        <taxon>Eukaryota</taxon>
        <taxon>Viridiplantae</taxon>
        <taxon>Streptophyta</taxon>
        <taxon>Embryophyta</taxon>
        <taxon>Tracheophyta</taxon>
        <taxon>Spermatophyta</taxon>
        <taxon>Magnoliopsida</taxon>
        <taxon>eudicotyledons</taxon>
        <taxon>Gunneridae</taxon>
        <taxon>Pentapetalae</taxon>
        <taxon>rosids</taxon>
        <taxon>malvids</taxon>
        <taxon>Brassicales</taxon>
        <taxon>Brassicaceae</taxon>
        <taxon>Camelineae</taxon>
        <taxon>Arabidopsis</taxon>
    </lineage>
</organism>
<feature type="transit peptide" description="Mitochondrion" evidence="1">
    <location>
        <begin position="1"/>
        <end position="37"/>
    </location>
</feature>
<feature type="chain" id="PRO_0000431842" description="Small ribosomal subunit protein uS11m">
    <location>
        <begin position="38"/>
        <end position="314"/>
    </location>
</feature>
<feature type="region of interest" description="Disordered" evidence="3">
    <location>
        <begin position="34"/>
        <end position="138"/>
    </location>
</feature>
<feature type="compositionally biased region" description="Polar residues" evidence="3">
    <location>
        <begin position="50"/>
        <end position="63"/>
    </location>
</feature>
<feature type="compositionally biased region" description="Low complexity" evidence="3">
    <location>
        <begin position="103"/>
        <end position="114"/>
    </location>
</feature>
<gene>
    <name evidence="11" type="primary">NFD3</name>
    <name evidence="8" type="ordered locus">At1g31817</name>
    <name evidence="9" type="ORF">F5M6.25</name>
</gene>
<evidence type="ECO:0000255" key="1"/>
<evidence type="ECO:0000255" key="2">
    <source>
        <dbReference type="HAMAP-Rule" id="MF_01310"/>
    </source>
</evidence>
<evidence type="ECO:0000256" key="3">
    <source>
        <dbReference type="SAM" id="MobiDB-lite"/>
    </source>
</evidence>
<evidence type="ECO:0000269" key="4">
    <source>
    </source>
</evidence>
<evidence type="ECO:0000303" key="5">
    <source>
    </source>
</evidence>
<evidence type="ECO:0000303" key="6">
    <source>
    </source>
</evidence>
<evidence type="ECO:0000305" key="7"/>
<evidence type="ECO:0000312" key="8">
    <source>
        <dbReference type="Araport" id="AT1G31817"/>
    </source>
</evidence>
<evidence type="ECO:0000312" key="9">
    <source>
        <dbReference type="EMBL" id="AAG50732.1"/>
    </source>
</evidence>
<evidence type="ECO:0000312" key="10">
    <source>
        <dbReference type="EMBL" id="AAL36201.1"/>
    </source>
</evidence>
<evidence type="ECO:0000312" key="11">
    <source>
        <dbReference type="EMBL" id="AEE31398.1"/>
    </source>
</evidence>
<name>RT11_ARATH</name>
<protein>
    <recommendedName>
        <fullName evidence="6">Small ribosomal subunit protein uS11m</fullName>
    </recommendedName>
    <alternativeName>
        <fullName evidence="7">Probable ribosomal protein S11, mitochondrial</fullName>
        <shortName>MRP-S11</shortName>
        <shortName>S11mt</shortName>
    </alternativeName>
    <alternativeName>
        <fullName evidence="5">Protein NUCLEAR FUSION DEFECTIVE 3, mitochondrial</fullName>
    </alternativeName>
</protein>